<reference key="1">
    <citation type="journal article" date="2005" name="Science">
        <title>Genome sequence of the PCE-dechlorinating bacterium Dehalococcoides ethenogenes.</title>
        <authorList>
            <person name="Seshadri R."/>
            <person name="Adrian L."/>
            <person name="Fouts D.E."/>
            <person name="Eisen J.A."/>
            <person name="Phillippy A.M."/>
            <person name="Methe B.A."/>
            <person name="Ward N.L."/>
            <person name="Nelson W.C."/>
            <person name="DeBoy R.T."/>
            <person name="Khouri H.M."/>
            <person name="Kolonay J.F."/>
            <person name="Dodson R.J."/>
            <person name="Daugherty S.C."/>
            <person name="Brinkac L.M."/>
            <person name="Sullivan S.A."/>
            <person name="Madupu R."/>
            <person name="Nelson K.E."/>
            <person name="Kang K.H."/>
            <person name="Impraim M."/>
            <person name="Tran K."/>
            <person name="Robinson J.M."/>
            <person name="Forberger H.A."/>
            <person name="Fraser C.M."/>
            <person name="Zinder S.H."/>
            <person name="Heidelberg J.F."/>
        </authorList>
    </citation>
    <scope>NUCLEOTIDE SEQUENCE [LARGE SCALE GENOMIC DNA]</scope>
    <source>
        <strain>ATCC BAA-2266 / KCTC 15142 / 195</strain>
    </source>
</reference>
<protein>
    <recommendedName>
        <fullName evidence="2">Elongation factor Tu</fullName>
        <shortName evidence="2">EF-Tu</shortName>
        <ecNumber evidence="2">3.6.5.3</ecNumber>
    </recommendedName>
</protein>
<organism>
    <name type="scientific">Dehalococcoides mccartyi (strain ATCC BAA-2266 / KCTC 15142 / 195)</name>
    <name type="common">Dehalococcoides ethenogenes (strain 195)</name>
    <dbReference type="NCBI Taxonomy" id="243164"/>
    <lineage>
        <taxon>Bacteria</taxon>
        <taxon>Bacillati</taxon>
        <taxon>Chloroflexota</taxon>
        <taxon>Dehalococcoidia</taxon>
        <taxon>Dehalococcoidales</taxon>
        <taxon>Dehalococcoidaceae</taxon>
        <taxon>Dehalococcoides</taxon>
    </lineage>
</organism>
<gene>
    <name evidence="2" type="primary">tuf</name>
    <name type="ordered locus">DET0997</name>
</gene>
<keyword id="KW-0963">Cytoplasm</keyword>
<keyword id="KW-0251">Elongation factor</keyword>
<keyword id="KW-0342">GTP-binding</keyword>
<keyword id="KW-0378">Hydrolase</keyword>
<keyword id="KW-0460">Magnesium</keyword>
<keyword id="KW-0479">Metal-binding</keyword>
<keyword id="KW-0547">Nucleotide-binding</keyword>
<keyword id="KW-0648">Protein biosynthesis</keyword>
<name>EFTU_DEHM1</name>
<feature type="chain" id="PRO_1000015647" description="Elongation factor Tu">
    <location>
        <begin position="1"/>
        <end position="400"/>
    </location>
</feature>
<feature type="domain" description="tr-type G">
    <location>
        <begin position="10"/>
        <end position="210"/>
    </location>
</feature>
<feature type="region of interest" description="G1" evidence="1">
    <location>
        <begin position="19"/>
        <end position="26"/>
    </location>
</feature>
<feature type="region of interest" description="G2" evidence="1">
    <location>
        <begin position="60"/>
        <end position="64"/>
    </location>
</feature>
<feature type="region of interest" description="G3" evidence="1">
    <location>
        <begin position="81"/>
        <end position="84"/>
    </location>
</feature>
<feature type="region of interest" description="G4" evidence="1">
    <location>
        <begin position="136"/>
        <end position="139"/>
    </location>
</feature>
<feature type="region of interest" description="G5" evidence="1">
    <location>
        <begin position="174"/>
        <end position="176"/>
    </location>
</feature>
<feature type="binding site" evidence="2">
    <location>
        <begin position="19"/>
        <end position="26"/>
    </location>
    <ligand>
        <name>GTP</name>
        <dbReference type="ChEBI" id="CHEBI:37565"/>
    </ligand>
</feature>
<feature type="binding site" evidence="2">
    <location>
        <position position="26"/>
    </location>
    <ligand>
        <name>Mg(2+)</name>
        <dbReference type="ChEBI" id="CHEBI:18420"/>
    </ligand>
</feature>
<feature type="binding site" evidence="2">
    <location>
        <begin position="81"/>
        <end position="85"/>
    </location>
    <ligand>
        <name>GTP</name>
        <dbReference type="ChEBI" id="CHEBI:37565"/>
    </ligand>
</feature>
<feature type="binding site" evidence="2">
    <location>
        <begin position="136"/>
        <end position="139"/>
    </location>
    <ligand>
        <name>GTP</name>
        <dbReference type="ChEBI" id="CHEBI:37565"/>
    </ligand>
</feature>
<comment type="function">
    <text evidence="2">GTP hydrolase that promotes the GTP-dependent binding of aminoacyl-tRNA to the A-site of ribosomes during protein biosynthesis.</text>
</comment>
<comment type="catalytic activity">
    <reaction evidence="2">
        <text>GTP + H2O = GDP + phosphate + H(+)</text>
        <dbReference type="Rhea" id="RHEA:19669"/>
        <dbReference type="ChEBI" id="CHEBI:15377"/>
        <dbReference type="ChEBI" id="CHEBI:15378"/>
        <dbReference type="ChEBI" id="CHEBI:37565"/>
        <dbReference type="ChEBI" id="CHEBI:43474"/>
        <dbReference type="ChEBI" id="CHEBI:58189"/>
        <dbReference type="EC" id="3.6.5.3"/>
    </reaction>
    <physiologicalReaction direction="left-to-right" evidence="2">
        <dbReference type="Rhea" id="RHEA:19670"/>
    </physiologicalReaction>
</comment>
<comment type="subunit">
    <text evidence="2">Monomer.</text>
</comment>
<comment type="subcellular location">
    <subcellularLocation>
        <location evidence="2">Cytoplasm</location>
    </subcellularLocation>
</comment>
<comment type="similarity">
    <text evidence="2">Belongs to the TRAFAC class translation factor GTPase superfamily. Classic translation factor GTPase family. EF-Tu/EF-1A subfamily.</text>
</comment>
<evidence type="ECO:0000250" key="1"/>
<evidence type="ECO:0000255" key="2">
    <source>
        <dbReference type="HAMAP-Rule" id="MF_00118"/>
    </source>
</evidence>
<proteinExistence type="inferred from homology"/>
<sequence>MAKQKFDRSKPHCNVGTIGHVDHGKTTLTAAITRTLSTKGWADFRAYDQIDNAPEEKARGLTIAISHIEYQTETRHYAHIDCPGHADYIKNMITGAAQMDGAILVVSAPDGPMPQTREHVLLIHQVEVPAVVVALNKCDMMDDEELLELVELEVRELLTKNSFPGDEIPIVRVSAIKALECGCGKRECEWCGRIWKLMDAVDSYIPIPPRPVDKPFLMKVEDVFSIKGRGTVATGRVERGIIKGGDEVDLVGLHHEPRKIVVTSLEMFHKILDSAEPGDAVGLLLRGVEREDIERGMVLAKPGSIKPHINAEAEVYVLSKDEGGRHTPFFNGYKPQFFFGTTDVTGEIHLPEGVEMVVPGDHVKMKISTIYPVAMEKGMRFAIREGGKTVGAGAISQVLS</sequence>
<dbReference type="EC" id="3.6.5.3" evidence="2"/>
<dbReference type="EMBL" id="CP000027">
    <property type="protein sequence ID" value="AAW39771.1"/>
    <property type="molecule type" value="Genomic_DNA"/>
</dbReference>
<dbReference type="RefSeq" id="WP_010936699.1">
    <property type="nucleotide sequence ID" value="NC_002936.3"/>
</dbReference>
<dbReference type="SMR" id="Q3Z7S9"/>
<dbReference type="FunCoup" id="Q3Z7S9">
    <property type="interactions" value="359"/>
</dbReference>
<dbReference type="STRING" id="243164.DET0997"/>
<dbReference type="GeneID" id="3229733"/>
<dbReference type="KEGG" id="det:DET0997"/>
<dbReference type="eggNOG" id="COG0050">
    <property type="taxonomic scope" value="Bacteria"/>
</dbReference>
<dbReference type="HOGENOM" id="CLU_007265_0_1_0"/>
<dbReference type="InParanoid" id="Q3Z7S9"/>
<dbReference type="Proteomes" id="UP000008289">
    <property type="component" value="Chromosome"/>
</dbReference>
<dbReference type="GO" id="GO:0005829">
    <property type="term" value="C:cytosol"/>
    <property type="evidence" value="ECO:0007669"/>
    <property type="project" value="TreeGrafter"/>
</dbReference>
<dbReference type="GO" id="GO:0005525">
    <property type="term" value="F:GTP binding"/>
    <property type="evidence" value="ECO:0007669"/>
    <property type="project" value="UniProtKB-UniRule"/>
</dbReference>
<dbReference type="GO" id="GO:0003924">
    <property type="term" value="F:GTPase activity"/>
    <property type="evidence" value="ECO:0007669"/>
    <property type="project" value="InterPro"/>
</dbReference>
<dbReference type="GO" id="GO:0003746">
    <property type="term" value="F:translation elongation factor activity"/>
    <property type="evidence" value="ECO:0007669"/>
    <property type="project" value="UniProtKB-UniRule"/>
</dbReference>
<dbReference type="CDD" id="cd01884">
    <property type="entry name" value="EF_Tu"/>
    <property type="match status" value="1"/>
</dbReference>
<dbReference type="CDD" id="cd03697">
    <property type="entry name" value="EFTU_II"/>
    <property type="match status" value="1"/>
</dbReference>
<dbReference type="CDD" id="cd03707">
    <property type="entry name" value="EFTU_III"/>
    <property type="match status" value="1"/>
</dbReference>
<dbReference type="FunFam" id="2.40.30.10:FF:000001">
    <property type="entry name" value="Elongation factor Tu"/>
    <property type="match status" value="1"/>
</dbReference>
<dbReference type="FunFam" id="3.40.50.300:FF:000003">
    <property type="entry name" value="Elongation factor Tu"/>
    <property type="match status" value="1"/>
</dbReference>
<dbReference type="Gene3D" id="3.40.50.300">
    <property type="entry name" value="P-loop containing nucleotide triphosphate hydrolases"/>
    <property type="match status" value="1"/>
</dbReference>
<dbReference type="Gene3D" id="2.40.30.10">
    <property type="entry name" value="Translation factors"/>
    <property type="match status" value="2"/>
</dbReference>
<dbReference type="HAMAP" id="MF_00118_B">
    <property type="entry name" value="EF_Tu_B"/>
    <property type="match status" value="1"/>
</dbReference>
<dbReference type="InterPro" id="IPR041709">
    <property type="entry name" value="EF-Tu_GTP-bd"/>
</dbReference>
<dbReference type="InterPro" id="IPR050055">
    <property type="entry name" value="EF-Tu_GTPase"/>
</dbReference>
<dbReference type="InterPro" id="IPR004161">
    <property type="entry name" value="EFTu-like_2"/>
</dbReference>
<dbReference type="InterPro" id="IPR033720">
    <property type="entry name" value="EFTU_2"/>
</dbReference>
<dbReference type="InterPro" id="IPR027417">
    <property type="entry name" value="P-loop_NTPase"/>
</dbReference>
<dbReference type="InterPro" id="IPR005225">
    <property type="entry name" value="Small_GTP-bd"/>
</dbReference>
<dbReference type="InterPro" id="IPR000795">
    <property type="entry name" value="T_Tr_GTP-bd_dom"/>
</dbReference>
<dbReference type="InterPro" id="IPR009000">
    <property type="entry name" value="Transl_B-barrel_sf"/>
</dbReference>
<dbReference type="InterPro" id="IPR009001">
    <property type="entry name" value="Transl_elong_EF1A/Init_IF2_C"/>
</dbReference>
<dbReference type="InterPro" id="IPR004541">
    <property type="entry name" value="Transl_elong_EFTu/EF1A_bac/org"/>
</dbReference>
<dbReference type="InterPro" id="IPR004160">
    <property type="entry name" value="Transl_elong_EFTu/EF1A_C"/>
</dbReference>
<dbReference type="NCBIfam" id="TIGR00485">
    <property type="entry name" value="EF-Tu"/>
    <property type="match status" value="1"/>
</dbReference>
<dbReference type="NCBIfam" id="NF000766">
    <property type="entry name" value="PRK00049.1"/>
    <property type="match status" value="1"/>
</dbReference>
<dbReference type="NCBIfam" id="NF009372">
    <property type="entry name" value="PRK12735.1"/>
    <property type="match status" value="1"/>
</dbReference>
<dbReference type="NCBIfam" id="NF009373">
    <property type="entry name" value="PRK12736.1"/>
    <property type="match status" value="1"/>
</dbReference>
<dbReference type="NCBIfam" id="TIGR00231">
    <property type="entry name" value="small_GTP"/>
    <property type="match status" value="1"/>
</dbReference>
<dbReference type="PANTHER" id="PTHR43721:SF22">
    <property type="entry name" value="ELONGATION FACTOR TU, MITOCHONDRIAL"/>
    <property type="match status" value="1"/>
</dbReference>
<dbReference type="PANTHER" id="PTHR43721">
    <property type="entry name" value="ELONGATION FACTOR TU-RELATED"/>
    <property type="match status" value="1"/>
</dbReference>
<dbReference type="Pfam" id="PF00009">
    <property type="entry name" value="GTP_EFTU"/>
    <property type="match status" value="1"/>
</dbReference>
<dbReference type="Pfam" id="PF03144">
    <property type="entry name" value="GTP_EFTU_D2"/>
    <property type="match status" value="1"/>
</dbReference>
<dbReference type="Pfam" id="PF03143">
    <property type="entry name" value="GTP_EFTU_D3"/>
    <property type="match status" value="1"/>
</dbReference>
<dbReference type="PRINTS" id="PR00315">
    <property type="entry name" value="ELONGATNFCT"/>
</dbReference>
<dbReference type="SUPFAM" id="SSF50465">
    <property type="entry name" value="EF-Tu/eEF-1alpha/eIF2-gamma C-terminal domain"/>
    <property type="match status" value="1"/>
</dbReference>
<dbReference type="SUPFAM" id="SSF52540">
    <property type="entry name" value="P-loop containing nucleoside triphosphate hydrolases"/>
    <property type="match status" value="1"/>
</dbReference>
<dbReference type="SUPFAM" id="SSF50447">
    <property type="entry name" value="Translation proteins"/>
    <property type="match status" value="1"/>
</dbReference>
<dbReference type="PROSITE" id="PS51722">
    <property type="entry name" value="G_TR_2"/>
    <property type="match status" value="1"/>
</dbReference>
<accession>Q3Z7S9</accession>